<evidence type="ECO:0000250" key="1">
    <source>
        <dbReference type="UniProtKB" id="Q06850"/>
    </source>
</evidence>
<evidence type="ECO:0000255" key="2">
    <source>
        <dbReference type="PROSITE-ProRule" id="PRU00159"/>
    </source>
</evidence>
<evidence type="ECO:0000255" key="3">
    <source>
        <dbReference type="PROSITE-ProRule" id="PRU00448"/>
    </source>
</evidence>
<evidence type="ECO:0000256" key="4">
    <source>
        <dbReference type="SAM" id="MobiDB-lite"/>
    </source>
</evidence>
<evidence type="ECO:0000269" key="5">
    <source>
    </source>
</evidence>
<evidence type="ECO:0000269" key="6">
    <source>
    </source>
</evidence>
<evidence type="ECO:0000269" key="7">
    <source>
    </source>
</evidence>
<evidence type="ECO:0000269" key="8">
    <source>
    </source>
</evidence>
<evidence type="ECO:0000303" key="9">
    <source>
    </source>
</evidence>
<evidence type="ECO:0000303" key="10">
    <source>
    </source>
</evidence>
<evidence type="ECO:0000305" key="11"/>
<evidence type="ECO:0000312" key="12">
    <source>
        <dbReference type="EMBL" id="AAX95085.1"/>
    </source>
</evidence>
<evidence type="ECO:0000312" key="13">
    <source>
        <dbReference type="EMBL" id="BAF27709.1"/>
    </source>
</evidence>
<evidence type="ECO:0000312" key="14">
    <source>
        <dbReference type="EMBL" id="EAZ17585.1"/>
    </source>
</evidence>
<sequence length="513" mass="56672">MQPDPSGSGGDGNANAKAKLAPPPVTAAGGRPVSVLPHKTANVRDHYRIGKKLGQGQFGTTYLCVDKASGGEFACKSIPKRKLLCREDYEDVWREIQIMHHLSEHPNVVRIRGAYEDALFVHIVMELCAGGELFDRIVAKGHYTERAAAQLIRTIVAVVEGCHSLGVMHRDLKPENFLFASAAEDAPLKATDFGLSMFYKPGDKFSDVVGSPYYVAPEVLQKCYGPESDVWSAGVILYILLCGVPPFWAETEAGIFRQILRGKLDFESEPWPSISDSAKDLVRNMLCRDPTKRLTAHEVLCHPWIVDDAVAPDKPIDSAVLSRLKHFSAMNKLKKMALRVIAESLSEEEIGGLKELFKMIDTDDSGTITFDELKEGLKRVGSELTEHEIQALMEAADIDNSGTIDYGEFIAATLHMNKLEREENLVSAFSFFDKDGSGFITIDELSQACREFGLDDLHLEDMIKDVDQNNDGQIDYSEFTAMMRKGNAGGAGRRTMRNSLQLNLGEILNPSNS</sequence>
<gene>
    <name evidence="9" type="primary">CPK24</name>
    <name evidence="13" type="ordered locus">Os11g0171500</name>
    <name evidence="12" type="ordered locus">LOC_Os11g07040</name>
    <name evidence="14" type="ORF">OsJ_33123</name>
</gene>
<organism>
    <name type="scientific">Oryza sativa subsp. japonica</name>
    <name type="common">Rice</name>
    <dbReference type="NCBI Taxonomy" id="39947"/>
    <lineage>
        <taxon>Eukaryota</taxon>
        <taxon>Viridiplantae</taxon>
        <taxon>Streptophyta</taxon>
        <taxon>Embryophyta</taxon>
        <taxon>Tracheophyta</taxon>
        <taxon>Spermatophyta</taxon>
        <taxon>Magnoliopsida</taxon>
        <taxon>Liliopsida</taxon>
        <taxon>Poales</taxon>
        <taxon>Poaceae</taxon>
        <taxon>BOP clade</taxon>
        <taxon>Oryzoideae</taxon>
        <taxon>Oryzeae</taxon>
        <taxon>Oryzinae</taxon>
        <taxon>Oryza</taxon>
        <taxon>Oryza sativa</taxon>
    </lineage>
</organism>
<reference key="1">
    <citation type="journal article" date="2005" name="J. Plant Physiol.">
        <title>Cloning and biochemical properties of CDPK gene OsCDPK14 from rice.</title>
        <authorList>
            <person name="Zhang T."/>
            <person name="Wang Q."/>
            <person name="Chen X."/>
            <person name="Tian C."/>
            <person name="Wang X."/>
            <person name="Xing T."/>
            <person name="Li Y."/>
            <person name="Wang Y."/>
        </authorList>
    </citation>
    <scope>NUCLEOTIDE SEQUENCE [MRNA]</scope>
    <scope>FUNCTION</scope>
    <scope>CATALYTIC ACTIVITY</scope>
    <scope>SUBCELLULAR LOCATION</scope>
</reference>
<reference key="2">
    <citation type="journal article" date="2005" name="BMC Biol.">
        <title>The sequence of rice chromosomes 11 and 12, rich in disease resistance genes and recent gene duplications.</title>
        <authorList>
            <consortium name="The rice chromosomes 11 and 12 sequencing consortia"/>
        </authorList>
    </citation>
    <scope>NUCLEOTIDE SEQUENCE [LARGE SCALE GENOMIC DNA]</scope>
    <source>
        <strain>cv. Nipponbare</strain>
    </source>
</reference>
<reference key="3">
    <citation type="journal article" date="2005" name="Nature">
        <title>The map-based sequence of the rice genome.</title>
        <authorList>
            <consortium name="International rice genome sequencing project (IRGSP)"/>
        </authorList>
    </citation>
    <scope>NUCLEOTIDE SEQUENCE [LARGE SCALE GENOMIC DNA]</scope>
    <source>
        <strain>cv. Nipponbare</strain>
    </source>
</reference>
<reference key="4">
    <citation type="journal article" date="2008" name="Nucleic Acids Res.">
        <title>The rice annotation project database (RAP-DB): 2008 update.</title>
        <authorList>
            <consortium name="The rice annotation project (RAP)"/>
        </authorList>
    </citation>
    <scope>GENOME REANNOTATION</scope>
    <source>
        <strain>cv. Nipponbare</strain>
    </source>
</reference>
<reference key="5">
    <citation type="journal article" date="2013" name="Rice">
        <title>Improvement of the Oryza sativa Nipponbare reference genome using next generation sequence and optical map data.</title>
        <authorList>
            <person name="Kawahara Y."/>
            <person name="de la Bastide M."/>
            <person name="Hamilton J.P."/>
            <person name="Kanamori H."/>
            <person name="McCombie W.R."/>
            <person name="Ouyang S."/>
            <person name="Schwartz D.C."/>
            <person name="Tanaka T."/>
            <person name="Wu J."/>
            <person name="Zhou S."/>
            <person name="Childs K.L."/>
            <person name="Davidson R.M."/>
            <person name="Lin H."/>
            <person name="Quesada-Ocampo L."/>
            <person name="Vaillancourt B."/>
            <person name="Sakai H."/>
            <person name="Lee S.S."/>
            <person name="Kim J."/>
            <person name="Numa H."/>
            <person name="Itoh T."/>
            <person name="Buell C.R."/>
            <person name="Matsumoto T."/>
        </authorList>
    </citation>
    <scope>GENOME REANNOTATION</scope>
    <source>
        <strain>cv. Nipponbare</strain>
    </source>
</reference>
<reference key="6">
    <citation type="journal article" date="2005" name="PLoS Biol.">
        <title>The genomes of Oryza sativa: a history of duplications.</title>
        <authorList>
            <person name="Yu J."/>
            <person name="Wang J."/>
            <person name="Lin W."/>
            <person name="Li S."/>
            <person name="Li H."/>
            <person name="Zhou J."/>
            <person name="Ni P."/>
            <person name="Dong W."/>
            <person name="Hu S."/>
            <person name="Zeng C."/>
            <person name="Zhang J."/>
            <person name="Zhang Y."/>
            <person name="Li R."/>
            <person name="Xu Z."/>
            <person name="Li S."/>
            <person name="Li X."/>
            <person name="Zheng H."/>
            <person name="Cong L."/>
            <person name="Lin L."/>
            <person name="Yin J."/>
            <person name="Geng J."/>
            <person name="Li G."/>
            <person name="Shi J."/>
            <person name="Liu J."/>
            <person name="Lv H."/>
            <person name="Li J."/>
            <person name="Wang J."/>
            <person name="Deng Y."/>
            <person name="Ran L."/>
            <person name="Shi X."/>
            <person name="Wang X."/>
            <person name="Wu Q."/>
            <person name="Li C."/>
            <person name="Ren X."/>
            <person name="Wang J."/>
            <person name="Wang X."/>
            <person name="Li D."/>
            <person name="Liu D."/>
            <person name="Zhang X."/>
            <person name="Ji Z."/>
            <person name="Zhao W."/>
            <person name="Sun Y."/>
            <person name="Zhang Z."/>
            <person name="Bao J."/>
            <person name="Han Y."/>
            <person name="Dong L."/>
            <person name="Ji J."/>
            <person name="Chen P."/>
            <person name="Wu S."/>
            <person name="Liu J."/>
            <person name="Xiao Y."/>
            <person name="Bu D."/>
            <person name="Tan J."/>
            <person name="Yang L."/>
            <person name="Ye C."/>
            <person name="Zhang J."/>
            <person name="Xu J."/>
            <person name="Zhou Y."/>
            <person name="Yu Y."/>
            <person name="Zhang B."/>
            <person name="Zhuang S."/>
            <person name="Wei H."/>
            <person name="Liu B."/>
            <person name="Lei M."/>
            <person name="Yu H."/>
            <person name="Li Y."/>
            <person name="Xu H."/>
            <person name="Wei S."/>
            <person name="He X."/>
            <person name="Fang L."/>
            <person name="Zhang Z."/>
            <person name="Zhang Y."/>
            <person name="Huang X."/>
            <person name="Su Z."/>
            <person name="Tong W."/>
            <person name="Li J."/>
            <person name="Tong Z."/>
            <person name="Li S."/>
            <person name="Ye J."/>
            <person name="Wang L."/>
            <person name="Fang L."/>
            <person name="Lei T."/>
            <person name="Chen C.-S."/>
            <person name="Chen H.-C."/>
            <person name="Xu Z."/>
            <person name="Li H."/>
            <person name="Huang H."/>
            <person name="Zhang F."/>
            <person name="Xu H."/>
            <person name="Li N."/>
            <person name="Zhao C."/>
            <person name="Li S."/>
            <person name="Dong L."/>
            <person name="Huang Y."/>
            <person name="Li L."/>
            <person name="Xi Y."/>
            <person name="Qi Q."/>
            <person name="Li W."/>
            <person name="Zhang B."/>
            <person name="Hu W."/>
            <person name="Zhang Y."/>
            <person name="Tian X."/>
            <person name="Jiao Y."/>
            <person name="Liang X."/>
            <person name="Jin J."/>
            <person name="Gao L."/>
            <person name="Zheng W."/>
            <person name="Hao B."/>
            <person name="Liu S.-M."/>
            <person name="Wang W."/>
            <person name="Yuan L."/>
            <person name="Cao M."/>
            <person name="McDermott J."/>
            <person name="Samudrala R."/>
            <person name="Wang J."/>
            <person name="Wong G.K.-S."/>
            <person name="Yang H."/>
        </authorList>
    </citation>
    <scope>NUCLEOTIDE SEQUENCE [LARGE SCALE GENOMIC DNA]</scope>
    <source>
        <strain>cv. Nipponbare</strain>
    </source>
</reference>
<reference key="7">
    <citation type="journal article" date="2003" name="Plant Mol. Biol.">
        <title>Rice gene expression in response to N-acetylchitooligosaccharide elicitor: comprehensive analysis by DNA microarray with randomly selected ESTs.</title>
        <authorList>
            <person name="Akimoto-Tomiyama C."/>
            <person name="Sakata K."/>
            <person name="Yazaki J."/>
            <person name="Nakamura K."/>
            <person name="Fujii F."/>
            <person name="Shimbo K."/>
            <person name="Yamamoto K."/>
            <person name="Sasaki T."/>
            <person name="Kishimoto N."/>
            <person name="Kikuchi S."/>
            <person name="Shibuya N."/>
            <person name="Minami E."/>
        </authorList>
    </citation>
    <scope>INDUCTION BY N-ACETYLCHITOOLIGOSACCHARIDE ELICITOR</scope>
</reference>
<reference key="8">
    <citation type="journal article" date="2005" name="Plant Cell Physiol.">
        <title>Genome-wide identification of the rice calcium-dependent protein kinase and its closely related kinase gene families: comprehensive analysis of the CDPKs gene family in rice.</title>
        <authorList>
            <person name="Asano T."/>
            <person name="Tanaka N."/>
            <person name="Yang G."/>
            <person name="Hayashi N."/>
            <person name="Komatsu S."/>
        </authorList>
    </citation>
    <scope>GENE FAMILY</scope>
    <scope>NOMENCLATURE</scope>
    <scope>TISSUE SPECIFICITY</scope>
</reference>
<reference key="9">
    <citation type="journal article" date="2013" name="Phytochemistry">
        <title>Transcriptomic analysis of UV-treated rice leaves reveals UV-induced phytoalexin biosynthetic pathways and their regulatory networks in rice.</title>
        <authorList>
            <person name="Park H.L."/>
            <person name="Lee S.W."/>
            <person name="Jung K.H."/>
            <person name="Hahn T.R."/>
            <person name="Cho M.H."/>
        </authorList>
    </citation>
    <scope>INDUCTION BY UV-C</scope>
</reference>
<comment type="function">
    <text evidence="1 7">May play a role in signal transduction pathways that involve calcium as a second messenger (By similarity). Possesses calcium-dependent protein kinase activity in vitro (PubMed:16255173).</text>
</comment>
<comment type="catalytic activity">
    <reaction evidence="7">
        <text>L-seryl-[protein] + ATP = O-phospho-L-seryl-[protein] + ADP + H(+)</text>
        <dbReference type="Rhea" id="RHEA:17989"/>
        <dbReference type="Rhea" id="RHEA-COMP:9863"/>
        <dbReference type="Rhea" id="RHEA-COMP:11604"/>
        <dbReference type="ChEBI" id="CHEBI:15378"/>
        <dbReference type="ChEBI" id="CHEBI:29999"/>
        <dbReference type="ChEBI" id="CHEBI:30616"/>
        <dbReference type="ChEBI" id="CHEBI:83421"/>
        <dbReference type="ChEBI" id="CHEBI:456216"/>
        <dbReference type="EC" id="2.7.11.1"/>
    </reaction>
</comment>
<comment type="catalytic activity">
    <reaction evidence="7">
        <text>L-threonyl-[protein] + ATP = O-phospho-L-threonyl-[protein] + ADP + H(+)</text>
        <dbReference type="Rhea" id="RHEA:46608"/>
        <dbReference type="Rhea" id="RHEA-COMP:11060"/>
        <dbReference type="Rhea" id="RHEA-COMP:11605"/>
        <dbReference type="ChEBI" id="CHEBI:15378"/>
        <dbReference type="ChEBI" id="CHEBI:30013"/>
        <dbReference type="ChEBI" id="CHEBI:30616"/>
        <dbReference type="ChEBI" id="CHEBI:61977"/>
        <dbReference type="ChEBI" id="CHEBI:456216"/>
        <dbReference type="EC" id="2.7.11.1"/>
    </reaction>
</comment>
<comment type="activity regulation">
    <text evidence="1">Activated by calcium. Autophosphorylation may play an important role in the regulation of the kinase activity.</text>
</comment>
<comment type="subcellular location">
    <subcellularLocation>
        <location evidence="7">Cytoplasm</location>
    </subcellularLocation>
</comment>
<comment type="tissue specificity">
    <text evidence="6">Expressed in roots.</text>
</comment>
<comment type="induction">
    <text evidence="5 8">By N-acetylchitooligosaccharide elicitor (PubMed:12956525). Induced by UV-C (PubMed:24035516).</text>
</comment>
<comment type="domain">
    <text evidence="1">There are 3 contiguous domains conserved in the CDPK subfamily: a kinase domain, an autoinhibitory (junction) domain and a calmodulin-like domain. The autoinhibitory domain (311-341) inactivates kinase activity under calcium-free conditions.</text>
</comment>
<comment type="similarity">
    <text evidence="11">Belongs to the protein kinase superfamily. Ser/Thr protein kinase family. CDPK subfamily.</text>
</comment>
<dbReference type="EC" id="2.7.11.1" evidence="7"/>
<dbReference type="EMBL" id="AY144497">
    <property type="protein sequence ID" value="AAN41657.1"/>
    <property type="molecule type" value="mRNA"/>
</dbReference>
<dbReference type="EMBL" id="AC128643">
    <property type="protein sequence ID" value="AAX95085.1"/>
    <property type="molecule type" value="Genomic_DNA"/>
</dbReference>
<dbReference type="EMBL" id="DP000010">
    <property type="protein sequence ID" value="ABA91635.1"/>
    <property type="molecule type" value="Genomic_DNA"/>
</dbReference>
<dbReference type="EMBL" id="AP008217">
    <property type="protein sequence ID" value="BAF27709.1"/>
    <property type="molecule type" value="Genomic_DNA"/>
</dbReference>
<dbReference type="EMBL" id="AP014967">
    <property type="protein sequence ID" value="BAT12871.1"/>
    <property type="molecule type" value="Genomic_DNA"/>
</dbReference>
<dbReference type="EMBL" id="CM000148">
    <property type="protein sequence ID" value="EAZ17585.1"/>
    <property type="molecule type" value="Genomic_DNA"/>
</dbReference>
<dbReference type="RefSeq" id="NP_001391378.1">
    <property type="nucleotide sequence ID" value="NM_001404449.1"/>
</dbReference>
<dbReference type="RefSeq" id="XP_015617352.1">
    <property type="nucleotide sequence ID" value="XM_015761866.1"/>
</dbReference>
<dbReference type="SMR" id="Q53P85"/>
<dbReference type="FunCoup" id="Q53P85">
    <property type="interactions" value="2085"/>
</dbReference>
<dbReference type="STRING" id="39947.Q53P85"/>
<dbReference type="PaxDb" id="39947-Q53P85"/>
<dbReference type="EnsemblPlants" id="Os11t0171500-01">
    <property type="protein sequence ID" value="Os11t0171500-01"/>
    <property type="gene ID" value="Os11g0171500"/>
</dbReference>
<dbReference type="GeneID" id="4349899"/>
<dbReference type="Gramene" id="Os11t0171500-01">
    <property type="protein sequence ID" value="Os11t0171500-01"/>
    <property type="gene ID" value="Os11g0171500"/>
</dbReference>
<dbReference type="KEGG" id="dosa:Os11g0171500"/>
<dbReference type="eggNOG" id="KOG0032">
    <property type="taxonomic scope" value="Eukaryota"/>
</dbReference>
<dbReference type="HOGENOM" id="CLU_000288_37_4_1"/>
<dbReference type="InParanoid" id="Q53P85"/>
<dbReference type="OMA" id="PFMGANE"/>
<dbReference type="OrthoDB" id="40902at2759"/>
<dbReference type="Proteomes" id="UP000000763">
    <property type="component" value="Chromosome 11"/>
</dbReference>
<dbReference type="Proteomes" id="UP000007752">
    <property type="component" value="Chromosome 11"/>
</dbReference>
<dbReference type="Proteomes" id="UP000059680">
    <property type="component" value="Chromosome 11"/>
</dbReference>
<dbReference type="GO" id="GO:0005737">
    <property type="term" value="C:cytoplasm"/>
    <property type="evidence" value="ECO:0000314"/>
    <property type="project" value="UniProtKB"/>
</dbReference>
<dbReference type="GO" id="GO:0005634">
    <property type="term" value="C:nucleus"/>
    <property type="evidence" value="ECO:0000318"/>
    <property type="project" value="GO_Central"/>
</dbReference>
<dbReference type="GO" id="GO:0005524">
    <property type="term" value="F:ATP binding"/>
    <property type="evidence" value="ECO:0007669"/>
    <property type="project" value="UniProtKB-KW"/>
</dbReference>
<dbReference type="GO" id="GO:0005509">
    <property type="term" value="F:calcium ion binding"/>
    <property type="evidence" value="ECO:0007669"/>
    <property type="project" value="InterPro"/>
</dbReference>
<dbReference type="GO" id="GO:0009931">
    <property type="term" value="F:calcium-dependent protein serine/threonine kinase activity"/>
    <property type="evidence" value="ECO:0000318"/>
    <property type="project" value="GO_Central"/>
</dbReference>
<dbReference type="GO" id="GO:0004683">
    <property type="term" value="F:calcium/calmodulin-dependent protein kinase activity"/>
    <property type="evidence" value="ECO:0000318"/>
    <property type="project" value="GO_Central"/>
</dbReference>
<dbReference type="GO" id="GO:0005516">
    <property type="term" value="F:calmodulin binding"/>
    <property type="evidence" value="ECO:0000318"/>
    <property type="project" value="GO_Central"/>
</dbReference>
<dbReference type="GO" id="GO:0106310">
    <property type="term" value="F:protein serine kinase activity"/>
    <property type="evidence" value="ECO:0007669"/>
    <property type="project" value="RHEA"/>
</dbReference>
<dbReference type="GO" id="GO:0035556">
    <property type="term" value="P:intracellular signal transduction"/>
    <property type="evidence" value="ECO:0000318"/>
    <property type="project" value="GO_Central"/>
</dbReference>
<dbReference type="CDD" id="cd00051">
    <property type="entry name" value="EFh"/>
    <property type="match status" value="2"/>
</dbReference>
<dbReference type="CDD" id="cd05117">
    <property type="entry name" value="STKc_CAMK"/>
    <property type="match status" value="1"/>
</dbReference>
<dbReference type="FunFam" id="1.10.238.10:FF:000015">
    <property type="entry name" value="Calcium-dependent protein kinase 1"/>
    <property type="match status" value="1"/>
</dbReference>
<dbReference type="FunFam" id="3.30.200.20:FF:000004">
    <property type="entry name" value="Calcium-dependent protein kinase 1"/>
    <property type="match status" value="1"/>
</dbReference>
<dbReference type="FunFam" id="1.10.510.10:FF:001864">
    <property type="entry name" value="Calcium-dependent protein kinase SK5"/>
    <property type="match status" value="1"/>
</dbReference>
<dbReference type="FunFam" id="1.10.510.10:FF:001294">
    <property type="entry name" value="CDPK-related kinase 3"/>
    <property type="match status" value="1"/>
</dbReference>
<dbReference type="Gene3D" id="1.10.238.10">
    <property type="entry name" value="EF-hand"/>
    <property type="match status" value="1"/>
</dbReference>
<dbReference type="Gene3D" id="3.30.200.20">
    <property type="entry name" value="Phosphorylase Kinase, domain 1"/>
    <property type="match status" value="1"/>
</dbReference>
<dbReference type="Gene3D" id="1.10.510.10">
    <property type="entry name" value="Transferase(Phosphotransferase) domain 1"/>
    <property type="match status" value="1"/>
</dbReference>
<dbReference type="InterPro" id="IPR050205">
    <property type="entry name" value="CDPK_Ser/Thr_kinases"/>
</dbReference>
<dbReference type="InterPro" id="IPR011992">
    <property type="entry name" value="EF-hand-dom_pair"/>
</dbReference>
<dbReference type="InterPro" id="IPR018247">
    <property type="entry name" value="EF_Hand_1_Ca_BS"/>
</dbReference>
<dbReference type="InterPro" id="IPR002048">
    <property type="entry name" value="EF_hand_dom"/>
</dbReference>
<dbReference type="InterPro" id="IPR011009">
    <property type="entry name" value="Kinase-like_dom_sf"/>
</dbReference>
<dbReference type="InterPro" id="IPR000719">
    <property type="entry name" value="Prot_kinase_dom"/>
</dbReference>
<dbReference type="InterPro" id="IPR017441">
    <property type="entry name" value="Protein_kinase_ATP_BS"/>
</dbReference>
<dbReference type="InterPro" id="IPR008271">
    <property type="entry name" value="Ser/Thr_kinase_AS"/>
</dbReference>
<dbReference type="PANTHER" id="PTHR24349">
    <property type="entry name" value="SERINE/THREONINE-PROTEIN KINASE"/>
    <property type="match status" value="1"/>
</dbReference>
<dbReference type="Pfam" id="PF13499">
    <property type="entry name" value="EF-hand_7"/>
    <property type="match status" value="2"/>
</dbReference>
<dbReference type="Pfam" id="PF00069">
    <property type="entry name" value="Pkinase"/>
    <property type="match status" value="1"/>
</dbReference>
<dbReference type="SMART" id="SM00054">
    <property type="entry name" value="EFh"/>
    <property type="match status" value="4"/>
</dbReference>
<dbReference type="SMART" id="SM00220">
    <property type="entry name" value="S_TKc"/>
    <property type="match status" value="1"/>
</dbReference>
<dbReference type="SUPFAM" id="SSF47473">
    <property type="entry name" value="EF-hand"/>
    <property type="match status" value="1"/>
</dbReference>
<dbReference type="SUPFAM" id="SSF56112">
    <property type="entry name" value="Protein kinase-like (PK-like)"/>
    <property type="match status" value="1"/>
</dbReference>
<dbReference type="PROSITE" id="PS00018">
    <property type="entry name" value="EF_HAND_1"/>
    <property type="match status" value="4"/>
</dbReference>
<dbReference type="PROSITE" id="PS50222">
    <property type="entry name" value="EF_HAND_2"/>
    <property type="match status" value="4"/>
</dbReference>
<dbReference type="PROSITE" id="PS00107">
    <property type="entry name" value="PROTEIN_KINASE_ATP"/>
    <property type="match status" value="1"/>
</dbReference>
<dbReference type="PROSITE" id="PS50011">
    <property type="entry name" value="PROTEIN_KINASE_DOM"/>
    <property type="match status" value="1"/>
</dbReference>
<dbReference type="PROSITE" id="PS00108">
    <property type="entry name" value="PROTEIN_KINASE_ST"/>
    <property type="match status" value="1"/>
</dbReference>
<feature type="chain" id="PRO_0000437566" description="Calcium-dependent protein kinase 24">
    <location>
        <begin position="1"/>
        <end position="513"/>
    </location>
</feature>
<feature type="domain" description="Protein kinase" evidence="2">
    <location>
        <begin position="47"/>
        <end position="305"/>
    </location>
</feature>
<feature type="domain" description="EF-hand 1" evidence="3">
    <location>
        <begin position="348"/>
        <end position="383"/>
    </location>
</feature>
<feature type="domain" description="EF-hand 2" evidence="3">
    <location>
        <begin position="384"/>
        <end position="419"/>
    </location>
</feature>
<feature type="domain" description="EF-hand 3" evidence="3">
    <location>
        <begin position="420"/>
        <end position="455"/>
    </location>
</feature>
<feature type="domain" description="EF-hand 4" evidence="3">
    <location>
        <begin position="458"/>
        <end position="489"/>
    </location>
</feature>
<feature type="region of interest" description="Disordered" evidence="4">
    <location>
        <begin position="1"/>
        <end position="33"/>
    </location>
</feature>
<feature type="region of interest" description="Autoinhibitory domain" evidence="1">
    <location>
        <begin position="311"/>
        <end position="341"/>
    </location>
</feature>
<feature type="active site" description="Proton acceptor" evidence="2">
    <location>
        <position position="171"/>
    </location>
</feature>
<feature type="binding site" evidence="2">
    <location>
        <begin position="53"/>
        <end position="61"/>
    </location>
    <ligand>
        <name>ATP</name>
        <dbReference type="ChEBI" id="CHEBI:30616"/>
    </ligand>
</feature>
<feature type="binding site" evidence="2">
    <location>
        <position position="76"/>
    </location>
    <ligand>
        <name>ATP</name>
        <dbReference type="ChEBI" id="CHEBI:30616"/>
    </ligand>
</feature>
<feature type="binding site" evidence="3">
    <location>
        <position position="361"/>
    </location>
    <ligand>
        <name>Ca(2+)</name>
        <dbReference type="ChEBI" id="CHEBI:29108"/>
        <label>1</label>
    </ligand>
</feature>
<feature type="binding site" evidence="3">
    <location>
        <position position="363"/>
    </location>
    <ligand>
        <name>Ca(2+)</name>
        <dbReference type="ChEBI" id="CHEBI:29108"/>
        <label>1</label>
    </ligand>
</feature>
<feature type="binding site" evidence="3">
    <location>
        <position position="365"/>
    </location>
    <ligand>
        <name>Ca(2+)</name>
        <dbReference type="ChEBI" id="CHEBI:29108"/>
        <label>1</label>
    </ligand>
</feature>
<feature type="binding site" evidence="3">
    <location>
        <position position="367"/>
    </location>
    <ligand>
        <name>Ca(2+)</name>
        <dbReference type="ChEBI" id="CHEBI:29108"/>
        <label>1</label>
    </ligand>
</feature>
<feature type="binding site" evidence="3">
    <location>
        <position position="372"/>
    </location>
    <ligand>
        <name>Ca(2+)</name>
        <dbReference type="ChEBI" id="CHEBI:29108"/>
        <label>1</label>
    </ligand>
</feature>
<feature type="binding site" evidence="3">
    <location>
        <position position="397"/>
    </location>
    <ligand>
        <name>Ca(2+)</name>
        <dbReference type="ChEBI" id="CHEBI:29108"/>
        <label>2</label>
    </ligand>
</feature>
<feature type="binding site" evidence="3">
    <location>
        <position position="399"/>
    </location>
    <ligand>
        <name>Ca(2+)</name>
        <dbReference type="ChEBI" id="CHEBI:29108"/>
        <label>2</label>
    </ligand>
</feature>
<feature type="binding site" evidence="3">
    <location>
        <position position="401"/>
    </location>
    <ligand>
        <name>Ca(2+)</name>
        <dbReference type="ChEBI" id="CHEBI:29108"/>
        <label>2</label>
    </ligand>
</feature>
<feature type="binding site" evidence="3">
    <location>
        <position position="403"/>
    </location>
    <ligand>
        <name>Ca(2+)</name>
        <dbReference type="ChEBI" id="CHEBI:29108"/>
        <label>2</label>
    </ligand>
</feature>
<feature type="binding site" evidence="3">
    <location>
        <position position="408"/>
    </location>
    <ligand>
        <name>Ca(2+)</name>
        <dbReference type="ChEBI" id="CHEBI:29108"/>
        <label>2</label>
    </ligand>
</feature>
<feature type="binding site" evidence="3">
    <location>
        <position position="433"/>
    </location>
    <ligand>
        <name>Ca(2+)</name>
        <dbReference type="ChEBI" id="CHEBI:29108"/>
        <label>3</label>
    </ligand>
</feature>
<feature type="binding site" evidence="3">
    <location>
        <position position="435"/>
    </location>
    <ligand>
        <name>Ca(2+)</name>
        <dbReference type="ChEBI" id="CHEBI:29108"/>
        <label>3</label>
    </ligand>
</feature>
<feature type="binding site" evidence="3">
    <location>
        <position position="437"/>
    </location>
    <ligand>
        <name>Ca(2+)</name>
        <dbReference type="ChEBI" id="CHEBI:29108"/>
        <label>3</label>
    </ligand>
</feature>
<feature type="binding site" evidence="3">
    <location>
        <position position="444"/>
    </location>
    <ligand>
        <name>Ca(2+)</name>
        <dbReference type="ChEBI" id="CHEBI:29108"/>
        <label>3</label>
    </ligand>
</feature>
<feature type="binding site" evidence="3">
    <location>
        <position position="467"/>
    </location>
    <ligand>
        <name>Ca(2+)</name>
        <dbReference type="ChEBI" id="CHEBI:29108"/>
        <label>4</label>
    </ligand>
</feature>
<feature type="binding site" evidence="3">
    <location>
        <position position="469"/>
    </location>
    <ligand>
        <name>Ca(2+)</name>
        <dbReference type="ChEBI" id="CHEBI:29108"/>
        <label>4</label>
    </ligand>
</feature>
<feature type="binding site" evidence="3">
    <location>
        <position position="471"/>
    </location>
    <ligand>
        <name>Ca(2+)</name>
        <dbReference type="ChEBI" id="CHEBI:29108"/>
        <label>4</label>
    </ligand>
</feature>
<feature type="binding site" evidence="3">
    <location>
        <position position="473"/>
    </location>
    <ligand>
        <name>Ca(2+)</name>
        <dbReference type="ChEBI" id="CHEBI:29108"/>
        <label>4</label>
    </ligand>
</feature>
<feature type="binding site" evidence="3">
    <location>
        <position position="478"/>
    </location>
    <ligand>
        <name>Ca(2+)</name>
        <dbReference type="ChEBI" id="CHEBI:29108"/>
        <label>4</label>
    </ligand>
</feature>
<feature type="sequence conflict" description="In Ref. 1; AAN41657." evidence="11" ref="1">
    <original>K</original>
    <variation>E</variation>
    <location>
        <position position="52"/>
    </location>
</feature>
<name>CDPKO_ORYSJ</name>
<proteinExistence type="evidence at protein level"/>
<keyword id="KW-0067">ATP-binding</keyword>
<keyword id="KW-0106">Calcium</keyword>
<keyword id="KW-0963">Cytoplasm</keyword>
<keyword id="KW-0418">Kinase</keyword>
<keyword id="KW-0479">Metal-binding</keyword>
<keyword id="KW-0547">Nucleotide-binding</keyword>
<keyword id="KW-1185">Reference proteome</keyword>
<keyword id="KW-0677">Repeat</keyword>
<keyword id="KW-0723">Serine/threonine-protein kinase</keyword>
<keyword id="KW-0808">Transferase</keyword>
<protein>
    <recommendedName>
        <fullName evidence="11">Calcium-dependent protein kinase 24</fullName>
        <shortName evidence="11">OsCDPK24</shortName>
        <shortName evidence="9">OsCPK24</shortName>
        <ecNumber evidence="7">2.7.11.1</ecNumber>
    </recommendedName>
    <alternativeName>
        <fullName evidence="10">Calcium-dependent protein kinase OsCDPK14</fullName>
    </alternativeName>
</protein>
<accession>Q53P85</accession>
<accession>Q6YIH2</accession>